<feature type="chain" id="PRO_1000146359" description="Small ribosomal subunit protein uS19">
    <location>
        <begin position="1"/>
        <end position="92"/>
    </location>
</feature>
<name>RS19_ALLAM</name>
<keyword id="KW-1185">Reference proteome</keyword>
<keyword id="KW-0687">Ribonucleoprotein</keyword>
<keyword id="KW-0689">Ribosomal protein</keyword>
<keyword id="KW-0694">RNA-binding</keyword>
<keyword id="KW-0699">rRNA-binding</keyword>
<protein>
    <recommendedName>
        <fullName evidence="1">Small ribosomal subunit protein uS19</fullName>
    </recommendedName>
    <alternativeName>
        <fullName evidence="2">30S ribosomal protein S19</fullName>
    </alternativeName>
</protein>
<gene>
    <name evidence="1" type="primary">rpsS</name>
    <name type="ordered locus">Avi_1844</name>
</gene>
<accession>B9JVP1</accession>
<proteinExistence type="inferred from homology"/>
<comment type="function">
    <text evidence="1">Protein S19 forms a complex with S13 that binds strongly to the 16S ribosomal RNA.</text>
</comment>
<comment type="similarity">
    <text evidence="1">Belongs to the universal ribosomal protein uS19 family.</text>
</comment>
<organism>
    <name type="scientific">Allorhizobium ampelinum (strain ATCC BAA-846 / DSM 112012 / S4)</name>
    <name type="common">Agrobacterium vitis (strain S4)</name>
    <dbReference type="NCBI Taxonomy" id="311402"/>
    <lineage>
        <taxon>Bacteria</taxon>
        <taxon>Pseudomonadati</taxon>
        <taxon>Pseudomonadota</taxon>
        <taxon>Alphaproteobacteria</taxon>
        <taxon>Hyphomicrobiales</taxon>
        <taxon>Rhizobiaceae</taxon>
        <taxon>Rhizobium/Agrobacterium group</taxon>
        <taxon>Allorhizobium</taxon>
        <taxon>Allorhizobium ampelinum</taxon>
    </lineage>
</organism>
<reference key="1">
    <citation type="journal article" date="2009" name="J. Bacteriol.">
        <title>Genome sequences of three Agrobacterium biovars help elucidate the evolution of multichromosome genomes in bacteria.</title>
        <authorList>
            <person name="Slater S.C."/>
            <person name="Goldman B.S."/>
            <person name="Goodner B."/>
            <person name="Setubal J.C."/>
            <person name="Farrand S.K."/>
            <person name="Nester E.W."/>
            <person name="Burr T.J."/>
            <person name="Banta L."/>
            <person name="Dickerman A.W."/>
            <person name="Paulsen I."/>
            <person name="Otten L."/>
            <person name="Suen G."/>
            <person name="Welch R."/>
            <person name="Almeida N.F."/>
            <person name="Arnold F."/>
            <person name="Burton O.T."/>
            <person name="Du Z."/>
            <person name="Ewing A."/>
            <person name="Godsy E."/>
            <person name="Heisel S."/>
            <person name="Houmiel K.L."/>
            <person name="Jhaveri J."/>
            <person name="Lu J."/>
            <person name="Miller N.M."/>
            <person name="Norton S."/>
            <person name="Chen Q."/>
            <person name="Phoolcharoen W."/>
            <person name="Ohlin V."/>
            <person name="Ondrusek D."/>
            <person name="Pride N."/>
            <person name="Stricklin S.L."/>
            <person name="Sun J."/>
            <person name="Wheeler C."/>
            <person name="Wilson L."/>
            <person name="Zhu H."/>
            <person name="Wood D.W."/>
        </authorList>
    </citation>
    <scope>NUCLEOTIDE SEQUENCE [LARGE SCALE GENOMIC DNA]</scope>
    <source>
        <strain>ATCC BAA-846 / DSM 112012 / S4</strain>
    </source>
</reference>
<evidence type="ECO:0000255" key="1">
    <source>
        <dbReference type="HAMAP-Rule" id="MF_00531"/>
    </source>
</evidence>
<evidence type="ECO:0000305" key="2"/>
<sequence length="92" mass="10461">MARSVWKGPFVDGYLLKKAEKVRESGRSEVIKMWTRRSTILPQFVGLTFGVYNGSKHIPVSVNEDMVGHKFGEFAPTRTYYGHGADKKAKRK</sequence>
<dbReference type="EMBL" id="CP000633">
    <property type="protein sequence ID" value="ACM36321.1"/>
    <property type="molecule type" value="Genomic_DNA"/>
</dbReference>
<dbReference type="RefSeq" id="WP_015915742.1">
    <property type="nucleotide sequence ID" value="NC_011989.1"/>
</dbReference>
<dbReference type="SMR" id="B9JVP1"/>
<dbReference type="STRING" id="311402.Avi_1844"/>
<dbReference type="GeneID" id="60682407"/>
<dbReference type="KEGG" id="avi:Avi_1844"/>
<dbReference type="eggNOG" id="COG0185">
    <property type="taxonomic scope" value="Bacteria"/>
</dbReference>
<dbReference type="HOGENOM" id="CLU_144911_0_1_5"/>
<dbReference type="Proteomes" id="UP000001596">
    <property type="component" value="Chromosome 1"/>
</dbReference>
<dbReference type="GO" id="GO:0005737">
    <property type="term" value="C:cytoplasm"/>
    <property type="evidence" value="ECO:0007669"/>
    <property type="project" value="UniProtKB-ARBA"/>
</dbReference>
<dbReference type="GO" id="GO:0015935">
    <property type="term" value="C:small ribosomal subunit"/>
    <property type="evidence" value="ECO:0007669"/>
    <property type="project" value="InterPro"/>
</dbReference>
<dbReference type="GO" id="GO:0019843">
    <property type="term" value="F:rRNA binding"/>
    <property type="evidence" value="ECO:0007669"/>
    <property type="project" value="UniProtKB-UniRule"/>
</dbReference>
<dbReference type="GO" id="GO:0003735">
    <property type="term" value="F:structural constituent of ribosome"/>
    <property type="evidence" value="ECO:0007669"/>
    <property type="project" value="InterPro"/>
</dbReference>
<dbReference type="GO" id="GO:0000028">
    <property type="term" value="P:ribosomal small subunit assembly"/>
    <property type="evidence" value="ECO:0007669"/>
    <property type="project" value="TreeGrafter"/>
</dbReference>
<dbReference type="GO" id="GO:0006412">
    <property type="term" value="P:translation"/>
    <property type="evidence" value="ECO:0007669"/>
    <property type="project" value="UniProtKB-UniRule"/>
</dbReference>
<dbReference type="FunFam" id="3.30.860.10:FF:000001">
    <property type="entry name" value="30S ribosomal protein S19"/>
    <property type="match status" value="1"/>
</dbReference>
<dbReference type="Gene3D" id="3.30.860.10">
    <property type="entry name" value="30s Ribosomal Protein S19, Chain A"/>
    <property type="match status" value="1"/>
</dbReference>
<dbReference type="HAMAP" id="MF_00531">
    <property type="entry name" value="Ribosomal_uS19"/>
    <property type="match status" value="1"/>
</dbReference>
<dbReference type="InterPro" id="IPR002222">
    <property type="entry name" value="Ribosomal_uS19"/>
</dbReference>
<dbReference type="InterPro" id="IPR005732">
    <property type="entry name" value="Ribosomal_uS19_bac-type"/>
</dbReference>
<dbReference type="InterPro" id="IPR020934">
    <property type="entry name" value="Ribosomal_uS19_CS"/>
</dbReference>
<dbReference type="InterPro" id="IPR023575">
    <property type="entry name" value="Ribosomal_uS19_SF"/>
</dbReference>
<dbReference type="NCBIfam" id="TIGR01050">
    <property type="entry name" value="rpsS_bact"/>
    <property type="match status" value="1"/>
</dbReference>
<dbReference type="PANTHER" id="PTHR11880">
    <property type="entry name" value="RIBOSOMAL PROTEIN S19P FAMILY MEMBER"/>
    <property type="match status" value="1"/>
</dbReference>
<dbReference type="PANTHER" id="PTHR11880:SF8">
    <property type="entry name" value="SMALL RIBOSOMAL SUBUNIT PROTEIN US19M"/>
    <property type="match status" value="1"/>
</dbReference>
<dbReference type="Pfam" id="PF00203">
    <property type="entry name" value="Ribosomal_S19"/>
    <property type="match status" value="1"/>
</dbReference>
<dbReference type="PIRSF" id="PIRSF002144">
    <property type="entry name" value="Ribosomal_S19"/>
    <property type="match status" value="1"/>
</dbReference>
<dbReference type="PRINTS" id="PR00975">
    <property type="entry name" value="RIBOSOMALS19"/>
</dbReference>
<dbReference type="SUPFAM" id="SSF54570">
    <property type="entry name" value="Ribosomal protein S19"/>
    <property type="match status" value="1"/>
</dbReference>
<dbReference type="PROSITE" id="PS00323">
    <property type="entry name" value="RIBOSOMAL_S19"/>
    <property type="match status" value="1"/>
</dbReference>